<keyword id="KW-0021">Allosteric enzyme</keyword>
<keyword id="KW-0328">Glycosyltransferase</keyword>
<keyword id="KW-0342">GTP-binding</keyword>
<keyword id="KW-0460">Magnesium</keyword>
<keyword id="KW-0547">Nucleotide-binding</keyword>
<keyword id="KW-0808">Transferase</keyword>
<gene>
    <name evidence="1" type="primary">upp</name>
    <name type="ordered locus">Psyr_0969</name>
</gene>
<protein>
    <recommendedName>
        <fullName evidence="1">Uracil phosphoribosyltransferase</fullName>
        <ecNumber evidence="1">2.4.2.9</ecNumber>
    </recommendedName>
    <alternativeName>
        <fullName evidence="1">UMP pyrophosphorylase</fullName>
    </alternativeName>
    <alternativeName>
        <fullName evidence="1">UPRTase</fullName>
    </alternativeName>
</protein>
<sequence length="212" mass="22935">MPIREIRHPLIRHKLGLMRRADISTKNFRELAQEVGALLTYEATADLTLENYDIQGWAGTVSVEKIAGKKITVVPILRAGIGMLDGVLSLIPGAKVSAVGVARNEETLQAHTYLEKLVPEIDERLAMIIDPMLATGSSMVATIDLLKKAGCKEIRAMVLVAAPEGIAAVEKAHPDVMIYTASIDERLNEHGYIIPGLGDAGDKIFGTKQKDA</sequence>
<name>UPP_PSEU2</name>
<proteinExistence type="inferred from homology"/>
<evidence type="ECO:0000255" key="1">
    <source>
        <dbReference type="HAMAP-Rule" id="MF_01218"/>
    </source>
</evidence>
<accession>Q4ZXU7</accession>
<organism>
    <name type="scientific">Pseudomonas syringae pv. syringae (strain B728a)</name>
    <dbReference type="NCBI Taxonomy" id="205918"/>
    <lineage>
        <taxon>Bacteria</taxon>
        <taxon>Pseudomonadati</taxon>
        <taxon>Pseudomonadota</taxon>
        <taxon>Gammaproteobacteria</taxon>
        <taxon>Pseudomonadales</taxon>
        <taxon>Pseudomonadaceae</taxon>
        <taxon>Pseudomonas</taxon>
        <taxon>Pseudomonas syringae</taxon>
    </lineage>
</organism>
<dbReference type="EC" id="2.4.2.9" evidence="1"/>
<dbReference type="EMBL" id="CP000075">
    <property type="protein sequence ID" value="AAY36025.1"/>
    <property type="molecule type" value="Genomic_DNA"/>
</dbReference>
<dbReference type="RefSeq" id="WP_002552170.1">
    <property type="nucleotide sequence ID" value="NC_007005.1"/>
</dbReference>
<dbReference type="RefSeq" id="YP_234063.1">
    <property type="nucleotide sequence ID" value="NC_007005.1"/>
</dbReference>
<dbReference type="SMR" id="Q4ZXU7"/>
<dbReference type="STRING" id="205918.Psyr_0969"/>
<dbReference type="GeneID" id="73734093"/>
<dbReference type="KEGG" id="psb:Psyr_0969"/>
<dbReference type="PATRIC" id="fig|205918.7.peg.998"/>
<dbReference type="eggNOG" id="COG0035">
    <property type="taxonomic scope" value="Bacteria"/>
</dbReference>
<dbReference type="HOGENOM" id="CLU_067096_2_2_6"/>
<dbReference type="OrthoDB" id="9781675at2"/>
<dbReference type="UniPathway" id="UPA00574">
    <property type="reaction ID" value="UER00636"/>
</dbReference>
<dbReference type="Proteomes" id="UP000000426">
    <property type="component" value="Chromosome"/>
</dbReference>
<dbReference type="GO" id="GO:0005525">
    <property type="term" value="F:GTP binding"/>
    <property type="evidence" value="ECO:0007669"/>
    <property type="project" value="UniProtKB-KW"/>
</dbReference>
<dbReference type="GO" id="GO:0000287">
    <property type="term" value="F:magnesium ion binding"/>
    <property type="evidence" value="ECO:0007669"/>
    <property type="project" value="UniProtKB-UniRule"/>
</dbReference>
<dbReference type="GO" id="GO:0004845">
    <property type="term" value="F:uracil phosphoribosyltransferase activity"/>
    <property type="evidence" value="ECO:0007669"/>
    <property type="project" value="UniProtKB-UniRule"/>
</dbReference>
<dbReference type="GO" id="GO:0044206">
    <property type="term" value="P:UMP salvage"/>
    <property type="evidence" value="ECO:0007669"/>
    <property type="project" value="UniProtKB-UniRule"/>
</dbReference>
<dbReference type="GO" id="GO:0006223">
    <property type="term" value="P:uracil salvage"/>
    <property type="evidence" value="ECO:0007669"/>
    <property type="project" value="InterPro"/>
</dbReference>
<dbReference type="CDD" id="cd06223">
    <property type="entry name" value="PRTases_typeI"/>
    <property type="match status" value="1"/>
</dbReference>
<dbReference type="FunFam" id="3.40.50.2020:FF:000003">
    <property type="entry name" value="Uracil phosphoribosyltransferase"/>
    <property type="match status" value="1"/>
</dbReference>
<dbReference type="Gene3D" id="3.40.50.2020">
    <property type="match status" value="1"/>
</dbReference>
<dbReference type="HAMAP" id="MF_01218_B">
    <property type="entry name" value="Upp_B"/>
    <property type="match status" value="1"/>
</dbReference>
<dbReference type="InterPro" id="IPR000836">
    <property type="entry name" value="PRibTrfase_dom"/>
</dbReference>
<dbReference type="InterPro" id="IPR029057">
    <property type="entry name" value="PRTase-like"/>
</dbReference>
<dbReference type="InterPro" id="IPR034332">
    <property type="entry name" value="Upp_B"/>
</dbReference>
<dbReference type="InterPro" id="IPR050054">
    <property type="entry name" value="UPRTase/APRTase"/>
</dbReference>
<dbReference type="InterPro" id="IPR005765">
    <property type="entry name" value="Ura_phspho_trans"/>
</dbReference>
<dbReference type="NCBIfam" id="NF001097">
    <property type="entry name" value="PRK00129.1"/>
    <property type="match status" value="1"/>
</dbReference>
<dbReference type="NCBIfam" id="TIGR01091">
    <property type="entry name" value="upp"/>
    <property type="match status" value="1"/>
</dbReference>
<dbReference type="PANTHER" id="PTHR32315">
    <property type="entry name" value="ADENINE PHOSPHORIBOSYLTRANSFERASE"/>
    <property type="match status" value="1"/>
</dbReference>
<dbReference type="PANTHER" id="PTHR32315:SF4">
    <property type="entry name" value="URACIL PHOSPHORIBOSYLTRANSFERASE, CHLOROPLASTIC"/>
    <property type="match status" value="1"/>
</dbReference>
<dbReference type="Pfam" id="PF14681">
    <property type="entry name" value="UPRTase"/>
    <property type="match status" value="1"/>
</dbReference>
<dbReference type="SUPFAM" id="SSF53271">
    <property type="entry name" value="PRTase-like"/>
    <property type="match status" value="1"/>
</dbReference>
<reference key="1">
    <citation type="journal article" date="2005" name="Proc. Natl. Acad. Sci. U.S.A.">
        <title>Comparison of the complete genome sequences of Pseudomonas syringae pv. syringae B728a and pv. tomato DC3000.</title>
        <authorList>
            <person name="Feil H."/>
            <person name="Feil W.S."/>
            <person name="Chain P."/>
            <person name="Larimer F."/>
            <person name="Dibartolo G."/>
            <person name="Copeland A."/>
            <person name="Lykidis A."/>
            <person name="Trong S."/>
            <person name="Nolan M."/>
            <person name="Goltsman E."/>
            <person name="Thiel J."/>
            <person name="Malfatti S."/>
            <person name="Loper J.E."/>
            <person name="Lapidus A."/>
            <person name="Detter J.C."/>
            <person name="Land M."/>
            <person name="Richardson P.M."/>
            <person name="Kyrpides N.C."/>
            <person name="Ivanova N."/>
            <person name="Lindow S.E."/>
        </authorList>
    </citation>
    <scope>NUCLEOTIDE SEQUENCE [LARGE SCALE GENOMIC DNA]</scope>
    <source>
        <strain>B728a</strain>
    </source>
</reference>
<comment type="function">
    <text evidence="1">Catalyzes the conversion of uracil and 5-phospho-alpha-D-ribose 1-diphosphate (PRPP) to UMP and diphosphate.</text>
</comment>
<comment type="catalytic activity">
    <reaction evidence="1">
        <text>UMP + diphosphate = 5-phospho-alpha-D-ribose 1-diphosphate + uracil</text>
        <dbReference type="Rhea" id="RHEA:13017"/>
        <dbReference type="ChEBI" id="CHEBI:17568"/>
        <dbReference type="ChEBI" id="CHEBI:33019"/>
        <dbReference type="ChEBI" id="CHEBI:57865"/>
        <dbReference type="ChEBI" id="CHEBI:58017"/>
        <dbReference type="EC" id="2.4.2.9"/>
    </reaction>
</comment>
<comment type="cofactor">
    <cofactor evidence="1">
        <name>Mg(2+)</name>
        <dbReference type="ChEBI" id="CHEBI:18420"/>
    </cofactor>
    <text evidence="1">Binds 1 Mg(2+) ion per subunit. The magnesium is bound as Mg-PRPP.</text>
</comment>
<comment type="activity regulation">
    <text evidence="1">Allosterically activated by GTP.</text>
</comment>
<comment type="pathway">
    <text evidence="1">Pyrimidine metabolism; UMP biosynthesis via salvage pathway; UMP from uracil: step 1/1.</text>
</comment>
<comment type="similarity">
    <text evidence="1">Belongs to the UPRTase family.</text>
</comment>
<feature type="chain" id="PRO_1000053767" description="Uracil phosphoribosyltransferase">
    <location>
        <begin position="1"/>
        <end position="212"/>
    </location>
</feature>
<feature type="binding site" evidence="1">
    <location>
        <position position="78"/>
    </location>
    <ligand>
        <name>5-phospho-alpha-D-ribose 1-diphosphate</name>
        <dbReference type="ChEBI" id="CHEBI:58017"/>
    </ligand>
</feature>
<feature type="binding site" evidence="1">
    <location>
        <position position="103"/>
    </location>
    <ligand>
        <name>5-phospho-alpha-D-ribose 1-diphosphate</name>
        <dbReference type="ChEBI" id="CHEBI:58017"/>
    </ligand>
</feature>
<feature type="binding site" evidence="1">
    <location>
        <begin position="130"/>
        <end position="138"/>
    </location>
    <ligand>
        <name>5-phospho-alpha-D-ribose 1-diphosphate</name>
        <dbReference type="ChEBI" id="CHEBI:58017"/>
    </ligand>
</feature>
<feature type="binding site" evidence="1">
    <location>
        <position position="193"/>
    </location>
    <ligand>
        <name>uracil</name>
        <dbReference type="ChEBI" id="CHEBI:17568"/>
    </ligand>
</feature>
<feature type="binding site" evidence="1">
    <location>
        <begin position="198"/>
        <end position="200"/>
    </location>
    <ligand>
        <name>uracil</name>
        <dbReference type="ChEBI" id="CHEBI:17568"/>
    </ligand>
</feature>
<feature type="binding site" evidence="1">
    <location>
        <position position="199"/>
    </location>
    <ligand>
        <name>5-phospho-alpha-D-ribose 1-diphosphate</name>
        <dbReference type="ChEBI" id="CHEBI:58017"/>
    </ligand>
</feature>